<sequence length="131" mass="15183">MNKSLIFLLSFAYSCYSTKTENNFDINDVENKACQYGCGFENVRRTSFRKTYDILYTCSECSTLFDLCIKYRTCQDGCVPEMPVLPYDQAKDVSARIRPPMNPCLDLVTACNYESMDSYEILRSENPFLYI</sequence>
<accession>P54218</accession>
<feature type="signal peptide" evidence="1">
    <location>
        <begin position="1"/>
        <end position="17"/>
    </location>
</feature>
<feature type="chain" id="PRO_0000022391" description="Spermatocyte protein spe-27">
    <location>
        <begin position="18"/>
        <end position="131"/>
    </location>
</feature>
<evidence type="ECO:0000255" key="1"/>
<evidence type="ECO:0000269" key="2">
    <source>
    </source>
</evidence>
<organism>
    <name type="scientific">Caenorhabditis elegans</name>
    <dbReference type="NCBI Taxonomy" id="6239"/>
    <lineage>
        <taxon>Eukaryota</taxon>
        <taxon>Metazoa</taxon>
        <taxon>Ecdysozoa</taxon>
        <taxon>Nematoda</taxon>
        <taxon>Chromadorea</taxon>
        <taxon>Rhabditida</taxon>
        <taxon>Rhabditina</taxon>
        <taxon>Rhabditomorpha</taxon>
        <taxon>Rhabditoidea</taxon>
        <taxon>Rhabditidae</taxon>
        <taxon>Peloderinae</taxon>
        <taxon>Caenorhabditis</taxon>
    </lineage>
</organism>
<reference key="1">
    <citation type="journal article" date="1996" name="Genetics">
        <title>Genetic and molecular analysis of spe-27, a gene required for spermiogenesis in Caenorhabditis elegans hermaphrodites.</title>
        <authorList>
            <person name="Minniti A.N."/>
            <person name="Sadler C.M."/>
            <person name="Ward S."/>
        </authorList>
    </citation>
    <scope>NUCLEOTIDE SEQUENCE [GENOMIC DNA]</scope>
    <scope>FUNCTION</scope>
    <source>
        <strain>Bristol N2</strain>
    </source>
</reference>
<reference key="2">
    <citation type="journal article" date="1998" name="Science">
        <title>Genome sequence of the nematode C. elegans: a platform for investigating biology.</title>
        <authorList>
            <consortium name="The C. elegans sequencing consortium"/>
        </authorList>
    </citation>
    <scope>NUCLEOTIDE SEQUENCE [LARGE SCALE GENOMIC DNA]</scope>
    <source>
        <strain>Bristol N2</strain>
    </source>
</reference>
<name>SPE27_CAEEL</name>
<dbReference type="EMBL" id="U37713">
    <property type="protein sequence ID" value="AAC47276.1"/>
    <property type="molecule type" value="Genomic_DNA"/>
</dbReference>
<dbReference type="EMBL" id="FO080387">
    <property type="protein sequence ID" value="CCD63374.1"/>
    <property type="molecule type" value="Genomic_DNA"/>
</dbReference>
<dbReference type="PIR" id="T34088">
    <property type="entry name" value="T34088"/>
</dbReference>
<dbReference type="RefSeq" id="NP_500875.1">
    <property type="nucleotide sequence ID" value="NM_068474.7"/>
</dbReference>
<dbReference type="FunCoup" id="P54218">
    <property type="interactions" value="98"/>
</dbReference>
<dbReference type="STRING" id="6239.C06E7.6.1"/>
<dbReference type="PaxDb" id="6239-C06E7.6"/>
<dbReference type="EnsemblMetazoa" id="C06E7.6.1">
    <property type="protein sequence ID" value="C06E7.6.1"/>
    <property type="gene ID" value="WBGene00004973"/>
</dbReference>
<dbReference type="GeneID" id="177357"/>
<dbReference type="KEGG" id="cel:CELE_C06E7.6"/>
<dbReference type="UCSC" id="C06E7.6">
    <property type="organism name" value="c. elegans"/>
</dbReference>
<dbReference type="AGR" id="WB:WBGene00004973"/>
<dbReference type="CTD" id="177357"/>
<dbReference type="WormBase" id="C06E7.6">
    <property type="protein sequence ID" value="CE03962"/>
    <property type="gene ID" value="WBGene00004973"/>
    <property type="gene designation" value="spe-27"/>
</dbReference>
<dbReference type="eggNOG" id="ENOG502T5X6">
    <property type="taxonomic scope" value="Eukaryota"/>
</dbReference>
<dbReference type="HOGENOM" id="CLU_1929463_0_0_1"/>
<dbReference type="InParanoid" id="P54218"/>
<dbReference type="OMA" id="ISACNYE"/>
<dbReference type="OrthoDB" id="5810105at2759"/>
<dbReference type="PRO" id="PR:P54218"/>
<dbReference type="Proteomes" id="UP000001940">
    <property type="component" value="Chromosome IV"/>
</dbReference>
<dbReference type="Bgee" id="WBGene00004973">
    <property type="expression patterns" value="Expressed in germ cell and 7 other cell types or tissues"/>
</dbReference>
<dbReference type="GO" id="GO:0007286">
    <property type="term" value="P:spermatid development"/>
    <property type="evidence" value="ECO:0000315"/>
    <property type="project" value="WormBase"/>
</dbReference>
<comment type="function">
    <text evidence="2">Required for spermiogenesis.</text>
</comment>
<gene>
    <name type="primary">spe-27</name>
    <name type="ORF">C06E7.6</name>
</gene>
<keyword id="KW-0217">Developmental protein</keyword>
<keyword id="KW-0221">Differentiation</keyword>
<keyword id="KW-1185">Reference proteome</keyword>
<keyword id="KW-0732">Signal</keyword>
<keyword id="KW-0744">Spermatogenesis</keyword>
<proteinExistence type="inferred from homology"/>
<protein>
    <recommendedName>
        <fullName>Spermatocyte protein spe-27</fullName>
    </recommendedName>
    <alternativeName>
        <fullName>Defective spermatogenesis protein 27</fullName>
    </alternativeName>
</protein>